<dbReference type="EMBL" id="BA000022">
    <property type="protein sequence ID" value="BAA18567.1"/>
    <property type="molecule type" value="Genomic_DNA"/>
</dbReference>
<dbReference type="PIR" id="S76438">
    <property type="entry name" value="S76438"/>
</dbReference>
<dbReference type="SMR" id="P74466"/>
<dbReference type="STRING" id="1148.gene:10499449"/>
<dbReference type="PaxDb" id="1148-1653655"/>
<dbReference type="EnsemblBacteria" id="BAA18567">
    <property type="protein sequence ID" value="BAA18567"/>
    <property type="gene ID" value="BAA18567"/>
</dbReference>
<dbReference type="KEGG" id="syn:slr0164"/>
<dbReference type="eggNOG" id="COG0740">
    <property type="taxonomic scope" value="Bacteria"/>
</dbReference>
<dbReference type="InParanoid" id="P74466"/>
<dbReference type="PhylomeDB" id="P74466"/>
<dbReference type="Proteomes" id="UP000001425">
    <property type="component" value="Chromosome"/>
</dbReference>
<dbReference type="GO" id="GO:0009368">
    <property type="term" value="C:endopeptidase Clp complex"/>
    <property type="evidence" value="ECO:0000318"/>
    <property type="project" value="GO_Central"/>
</dbReference>
<dbReference type="GO" id="GO:0004176">
    <property type="term" value="F:ATP-dependent peptidase activity"/>
    <property type="evidence" value="ECO:0000318"/>
    <property type="project" value="GO_Central"/>
</dbReference>
<dbReference type="GO" id="GO:0051117">
    <property type="term" value="F:ATPase binding"/>
    <property type="evidence" value="ECO:0000318"/>
    <property type="project" value="GO_Central"/>
</dbReference>
<dbReference type="GO" id="GO:0004252">
    <property type="term" value="F:serine-type endopeptidase activity"/>
    <property type="evidence" value="ECO:0000318"/>
    <property type="project" value="GO_Central"/>
</dbReference>
<dbReference type="GO" id="GO:0006515">
    <property type="term" value="P:protein quality control for misfolded or incompletely synthesized proteins"/>
    <property type="evidence" value="ECO:0000318"/>
    <property type="project" value="GO_Central"/>
</dbReference>
<dbReference type="CDD" id="cd07017">
    <property type="entry name" value="S14_ClpP_2"/>
    <property type="match status" value="1"/>
</dbReference>
<dbReference type="FunFam" id="3.90.226.10:FF:000020">
    <property type="entry name" value="ATP-dependent Clp protease proteolytic subunit"/>
    <property type="match status" value="1"/>
</dbReference>
<dbReference type="Gene3D" id="3.90.226.10">
    <property type="entry name" value="2-enoyl-CoA Hydratase, Chain A, domain 1"/>
    <property type="match status" value="1"/>
</dbReference>
<dbReference type="InterPro" id="IPR001907">
    <property type="entry name" value="ClpP"/>
</dbReference>
<dbReference type="InterPro" id="IPR029045">
    <property type="entry name" value="ClpP/crotonase-like_dom_sf"/>
</dbReference>
<dbReference type="InterPro" id="IPR023562">
    <property type="entry name" value="ClpP/TepA"/>
</dbReference>
<dbReference type="NCBIfam" id="NF009204">
    <property type="entry name" value="PRK12552.1"/>
    <property type="match status" value="1"/>
</dbReference>
<dbReference type="PANTHER" id="PTHR10381">
    <property type="entry name" value="ATP-DEPENDENT CLP PROTEASE PROTEOLYTIC SUBUNIT"/>
    <property type="match status" value="1"/>
</dbReference>
<dbReference type="PANTHER" id="PTHR10381:SF72">
    <property type="entry name" value="ATP-DEPENDENT CLP PROTEASE PROTEOLYTIC SUBUNIT-LIKE-RELATED"/>
    <property type="match status" value="1"/>
</dbReference>
<dbReference type="Pfam" id="PF00574">
    <property type="entry name" value="CLP_protease"/>
    <property type="match status" value="1"/>
</dbReference>
<dbReference type="PRINTS" id="PR00127">
    <property type="entry name" value="CLPPROTEASEP"/>
</dbReference>
<dbReference type="SUPFAM" id="SSF52096">
    <property type="entry name" value="ClpP/crotonase"/>
    <property type="match status" value="1"/>
</dbReference>
<name>CLPR_SYNY3</name>
<gene>
    <name type="primary">clpR</name>
    <name type="ordered locus">slr0164</name>
</gene>
<protein>
    <recommendedName>
        <fullName>Putative ATP-dependent Clp protease proteolytic subunit-like</fullName>
    </recommendedName>
    <alternativeName>
        <fullName>Endopeptidase Clp-like</fullName>
    </alternativeName>
</protein>
<evidence type="ECO:0000305" key="1"/>
<sequence>MEITAVQSSYYGDMAFKTPPPDLESLLLKERIVYLGMPLFSSDEVKQQVGIDVTQLIIAQLLYLQFDDPDKPIYFYINSTGTSWYTGDAVGFETEAFAICDTLNYIKPPVHTICIGQAMGTAAMILSSGTKGYRASLPHATIVLNQNRTGAQGQATDIQIRAKEVISNKQTMLEILSLNTGQTQEKLAKDMDRTFYLTPAQAKEYGLIDRVLESPAELPKPMAVI</sequence>
<organism>
    <name type="scientific">Synechocystis sp. (strain ATCC 27184 / PCC 6803 / Kazusa)</name>
    <dbReference type="NCBI Taxonomy" id="1111708"/>
    <lineage>
        <taxon>Bacteria</taxon>
        <taxon>Bacillati</taxon>
        <taxon>Cyanobacteriota</taxon>
        <taxon>Cyanophyceae</taxon>
        <taxon>Synechococcales</taxon>
        <taxon>Merismopediaceae</taxon>
        <taxon>Synechocystis</taxon>
    </lineage>
</organism>
<keyword id="KW-1185">Reference proteome</keyword>
<accession>P74466</accession>
<comment type="function">
    <text>Has lost the two conserved residues (Ser and His) proposed to be part of the active site. Therefore it could be inactive.</text>
</comment>
<comment type="similarity">
    <text evidence="1">Belongs to the peptidase S14 family.</text>
</comment>
<reference key="1">
    <citation type="journal article" date="1996" name="DNA Res.">
        <title>Sequence analysis of the genome of the unicellular cyanobacterium Synechocystis sp. strain PCC6803. II. Sequence determination of the entire genome and assignment of potential protein-coding regions.</title>
        <authorList>
            <person name="Kaneko T."/>
            <person name="Sato S."/>
            <person name="Kotani H."/>
            <person name="Tanaka A."/>
            <person name="Asamizu E."/>
            <person name="Nakamura Y."/>
            <person name="Miyajima N."/>
            <person name="Hirosawa M."/>
            <person name="Sugiura M."/>
            <person name="Sasamoto S."/>
            <person name="Kimura T."/>
            <person name="Hosouchi T."/>
            <person name="Matsuno A."/>
            <person name="Muraki A."/>
            <person name="Nakazaki N."/>
            <person name="Naruo K."/>
            <person name="Okumura S."/>
            <person name="Shimpo S."/>
            <person name="Takeuchi C."/>
            <person name="Wada T."/>
            <person name="Watanabe A."/>
            <person name="Yamada M."/>
            <person name="Yasuda M."/>
            <person name="Tabata S."/>
        </authorList>
    </citation>
    <scope>NUCLEOTIDE SEQUENCE [LARGE SCALE GENOMIC DNA]</scope>
    <source>
        <strain>ATCC 27184 / PCC 6803 / Kazusa</strain>
    </source>
</reference>
<feature type="chain" id="PRO_0000179697" description="Putative ATP-dependent Clp protease proteolytic subunit-like">
    <location>
        <begin position="1"/>
        <end position="225"/>
    </location>
</feature>
<proteinExistence type="inferred from homology"/>